<organism>
    <name type="scientific">Nostoc sp. (strain PCC 7120 / SAG 25.82 / UTEX 2576)</name>
    <dbReference type="NCBI Taxonomy" id="103690"/>
    <lineage>
        <taxon>Bacteria</taxon>
        <taxon>Bacillati</taxon>
        <taxon>Cyanobacteriota</taxon>
        <taxon>Cyanophyceae</taxon>
        <taxon>Nostocales</taxon>
        <taxon>Nostocaceae</taxon>
        <taxon>Nostoc</taxon>
    </lineage>
</organism>
<dbReference type="EMBL" id="BA000019">
    <property type="protein sequence ID" value="BAB77783.1"/>
    <property type="molecule type" value="Genomic_DNA"/>
</dbReference>
<dbReference type="PIR" id="AC1839">
    <property type="entry name" value="AC1839"/>
</dbReference>
<dbReference type="RefSeq" id="WP_010994436.1">
    <property type="nucleotide sequence ID" value="NZ_RSCN01000032.1"/>
</dbReference>
<dbReference type="SMR" id="Q8Z044"/>
<dbReference type="STRING" id="103690.gene:10492267"/>
<dbReference type="KEGG" id="ana:all0259"/>
<dbReference type="eggNOG" id="COG2010">
    <property type="taxonomic scope" value="Bacteria"/>
</dbReference>
<dbReference type="OrthoDB" id="486949at2"/>
<dbReference type="Proteomes" id="UP000002483">
    <property type="component" value="Chromosome"/>
</dbReference>
<dbReference type="GO" id="GO:0009523">
    <property type="term" value="C:photosystem II"/>
    <property type="evidence" value="ECO:0007669"/>
    <property type="project" value="UniProtKB-KW"/>
</dbReference>
<dbReference type="GO" id="GO:0031676">
    <property type="term" value="C:plasma membrane-derived thylakoid membrane"/>
    <property type="evidence" value="ECO:0007669"/>
    <property type="project" value="UniProtKB-SubCell"/>
</dbReference>
<dbReference type="GO" id="GO:0009055">
    <property type="term" value="F:electron transfer activity"/>
    <property type="evidence" value="ECO:0007669"/>
    <property type="project" value="InterPro"/>
</dbReference>
<dbReference type="GO" id="GO:0020037">
    <property type="term" value="F:heme binding"/>
    <property type="evidence" value="ECO:0007669"/>
    <property type="project" value="InterPro"/>
</dbReference>
<dbReference type="GO" id="GO:0005506">
    <property type="term" value="F:iron ion binding"/>
    <property type="evidence" value="ECO:0007669"/>
    <property type="project" value="InterPro"/>
</dbReference>
<dbReference type="GO" id="GO:0019684">
    <property type="term" value="P:photosynthesis, light reaction"/>
    <property type="evidence" value="ECO:0007669"/>
    <property type="project" value="UniProtKB-UniRule"/>
</dbReference>
<dbReference type="GO" id="GO:0022904">
    <property type="term" value="P:respiratory electron transport chain"/>
    <property type="evidence" value="ECO:0007669"/>
    <property type="project" value="InterPro"/>
</dbReference>
<dbReference type="Gene3D" id="1.10.760.10">
    <property type="entry name" value="Cytochrome c-like domain"/>
    <property type="match status" value="1"/>
</dbReference>
<dbReference type="HAMAP" id="MF_01378">
    <property type="entry name" value="PSII_Cyt550"/>
    <property type="match status" value="1"/>
</dbReference>
<dbReference type="InterPro" id="IPR009056">
    <property type="entry name" value="Cyt_c-like_dom"/>
</dbReference>
<dbReference type="InterPro" id="IPR036909">
    <property type="entry name" value="Cyt_c-like_dom_sf"/>
</dbReference>
<dbReference type="InterPro" id="IPR029490">
    <property type="entry name" value="Cytochrom_C550"/>
</dbReference>
<dbReference type="InterPro" id="IPR017851">
    <property type="entry name" value="PsbV_cyt_c550"/>
</dbReference>
<dbReference type="InterPro" id="IPR016003">
    <property type="entry name" value="PsbV_cyt_c550-like"/>
</dbReference>
<dbReference type="NCBIfam" id="TIGR03045">
    <property type="entry name" value="PS_II_C550"/>
    <property type="match status" value="1"/>
</dbReference>
<dbReference type="Pfam" id="PF14495">
    <property type="entry name" value="Cytochrom_C550"/>
    <property type="match status" value="1"/>
</dbReference>
<dbReference type="PIRSF" id="PIRSF005890">
    <property type="entry name" value="Phot_II_cyt_c550"/>
    <property type="match status" value="1"/>
</dbReference>
<dbReference type="SUPFAM" id="SSF46626">
    <property type="entry name" value="Cytochrome c"/>
    <property type="match status" value="1"/>
</dbReference>
<dbReference type="PROSITE" id="PS51007">
    <property type="entry name" value="CYTC"/>
    <property type="match status" value="1"/>
</dbReference>
<keyword id="KW-0249">Electron transport</keyword>
<keyword id="KW-0349">Heme</keyword>
<keyword id="KW-0408">Iron</keyword>
<keyword id="KW-0472">Membrane</keyword>
<keyword id="KW-0479">Metal-binding</keyword>
<keyword id="KW-0602">Photosynthesis</keyword>
<keyword id="KW-0604">Photosystem II</keyword>
<keyword id="KW-1185">Reference proteome</keyword>
<keyword id="KW-0732">Signal</keyword>
<keyword id="KW-0793">Thylakoid</keyword>
<keyword id="KW-0813">Transport</keyword>
<reference key="1">
    <citation type="journal article" date="2001" name="DNA Res.">
        <title>Complete genomic sequence of the filamentous nitrogen-fixing cyanobacterium Anabaena sp. strain PCC 7120.</title>
        <authorList>
            <person name="Kaneko T."/>
            <person name="Nakamura Y."/>
            <person name="Wolk C.P."/>
            <person name="Kuritz T."/>
            <person name="Sasamoto S."/>
            <person name="Watanabe A."/>
            <person name="Iriguchi M."/>
            <person name="Ishikawa A."/>
            <person name="Kawashima K."/>
            <person name="Kimura T."/>
            <person name="Kishida Y."/>
            <person name="Kohara M."/>
            <person name="Matsumoto M."/>
            <person name="Matsuno A."/>
            <person name="Muraki A."/>
            <person name="Nakazaki N."/>
            <person name="Shimpo S."/>
            <person name="Sugimoto M."/>
            <person name="Takazawa M."/>
            <person name="Yamada M."/>
            <person name="Yasuda M."/>
            <person name="Tabata S."/>
        </authorList>
    </citation>
    <scope>NUCLEOTIDE SEQUENCE [LARGE SCALE GENOMIC DNA]</scope>
    <source>
        <strain>PCC 7120 / SAG 25.82 / UTEX 2576</strain>
    </source>
</reference>
<accession>Q8Z044</accession>
<protein>
    <recommendedName>
        <fullName evidence="1">Photosystem II extrinsic protein V</fullName>
        <shortName evidence="1">PsbV</shortName>
    </recommendedName>
    <alternativeName>
        <fullName evidence="1">Cytochrome c-550</fullName>
    </alternativeName>
    <alternativeName>
        <fullName evidence="1">Cytochrome c550</fullName>
    </alternativeName>
    <alternativeName>
        <fullName evidence="1">Low-potential cytochrome c</fullName>
    </alternativeName>
</protein>
<feature type="signal peptide" evidence="1">
    <location>
        <begin position="1"/>
        <end position="26"/>
    </location>
</feature>
<feature type="chain" id="PRO_0000295595" description="Photosystem II extrinsic protein V">
    <location>
        <begin position="27"/>
        <end position="163"/>
    </location>
</feature>
<feature type="binding site" description="covalent" evidence="1">
    <location>
        <position position="63"/>
    </location>
    <ligand>
        <name>heme c</name>
        <dbReference type="ChEBI" id="CHEBI:61717"/>
    </ligand>
</feature>
<feature type="binding site" description="covalent" evidence="1">
    <location>
        <position position="66"/>
    </location>
    <ligand>
        <name>heme c</name>
        <dbReference type="ChEBI" id="CHEBI:61717"/>
    </ligand>
</feature>
<feature type="binding site" description="axial binding residue" evidence="1">
    <location>
        <position position="67"/>
    </location>
    <ligand>
        <name>heme c</name>
        <dbReference type="ChEBI" id="CHEBI:61717"/>
    </ligand>
    <ligandPart>
        <name>Fe</name>
        <dbReference type="ChEBI" id="CHEBI:18248"/>
    </ligandPart>
</feature>
<feature type="binding site" description="axial binding residue" evidence="1">
    <location>
        <position position="118"/>
    </location>
    <ligand>
        <name>heme c</name>
        <dbReference type="ChEBI" id="CHEBI:61717"/>
    </ligand>
    <ligandPart>
        <name>Fe</name>
        <dbReference type="ChEBI" id="CHEBI:18248"/>
    </ligandPart>
</feature>
<name>CY550_NOSS1</name>
<gene>
    <name evidence="1" type="primary">psbV</name>
    <name type="ordered locus">all0259</name>
</gene>
<proteinExistence type="inferred from homology"/>
<sequence length="163" mass="17759">MFRRLIGVVVATALLTFQLIVGSATALELDEATRTVPLNAQGDTVTLSLKQVKEGKRLFQYACAQCHVGGVTKTNQNVGLEPEALALATPNRNNIEGLVDYMKNPTTYDGVEEISEIHPSLKSADIFTAMRNLTDKDLESIAGHILLQPKILGDKWGGGKIYY</sequence>
<evidence type="ECO:0000255" key="1">
    <source>
        <dbReference type="HAMAP-Rule" id="MF_01378"/>
    </source>
</evidence>
<comment type="function">
    <text evidence="1">One of the extrinsic, lumenal subunits of photosystem II (PSII). PSII is a light-driven water plastoquinone oxidoreductase, using light energy to abstract electrons from H(2)O, generating a proton gradient subsequently used for ATP formation. The extrinsic proteins stabilize the structure of photosystem II oxygen-evolving complex (OEC), the ion environment of oxygen evolution and protect the OEC against heat-induced inactivation. Low-potential cytochrome c that plays a role in the OEC of PSII.</text>
</comment>
<comment type="cofactor">
    <cofactor evidence="1">
        <name>heme c</name>
        <dbReference type="ChEBI" id="CHEBI:61717"/>
    </cofactor>
    <text evidence="1">Binds 1 heme c group covalently per subunit.</text>
</comment>
<comment type="subunit">
    <text evidence="1">PSII is composed of 1 copy each of membrane proteins PsbA, PsbB, PsbC, PsbD, PsbE, PsbF, PsbH, PsbI, PsbJ, PsbK, PsbL, PsbM, PsbT, PsbX, PsbY, PsbZ, Psb30/Ycf12, peripheral proteins PsbO, CyanoQ (PsbQ), PsbU, PsbV and a large number of cofactors. It forms dimeric complexes.</text>
</comment>
<comment type="subcellular location">
    <subcellularLocation>
        <location evidence="1">Cellular thylakoid membrane</location>
        <topology evidence="1">Peripheral membrane protein</topology>
        <orientation evidence="1">Lumenal side</orientation>
    </subcellularLocation>
    <text evidence="1">Associated with photosystem II at the lumenal side of the thylakoid membrane.</text>
</comment>
<comment type="similarity">
    <text evidence="1">Belongs to the cytochrome c family. PsbV subfamily.</text>
</comment>